<keyword id="KW-1185">Reference proteome</keyword>
<organism>
    <name type="scientific">Haemophilus influenzae (strain ATCC 51907 / DSM 11121 / KW20 / Rd)</name>
    <dbReference type="NCBI Taxonomy" id="71421"/>
    <lineage>
        <taxon>Bacteria</taxon>
        <taxon>Pseudomonadati</taxon>
        <taxon>Pseudomonadota</taxon>
        <taxon>Gammaproteobacteria</taxon>
        <taxon>Pasteurellales</taxon>
        <taxon>Pasteurellaceae</taxon>
        <taxon>Haemophilus</taxon>
    </lineage>
</organism>
<sequence>MYPLFETLCIENGKIQNINLHQVRYERSLREYYGKSAVKIFNLFSLIQLPTPLQNQLIRCRIDYNAETTQIQYFEYQRKIYRTFQPVICDDIEYSLKYSDRSLINTLFAQRGACDEIMIIKNGKVTDCSIGNLIFRQGKKWYTPDTPLLLGTQREKLLQEGKIQERTIFQEDIVNFDEIKIINAMNGL</sequence>
<proteinExistence type="predicted"/>
<protein>
    <recommendedName>
        <fullName>Uncharacterized protein HI_1169</fullName>
    </recommendedName>
</protein>
<name>Y1169_HAEIN</name>
<feature type="chain" id="PRO_0000078008" description="Uncharacterized protein HI_1169">
    <location>
        <begin position="1"/>
        <end position="188"/>
    </location>
</feature>
<gene>
    <name type="ordered locus">HI_1169</name>
</gene>
<reference key="1">
    <citation type="journal article" date="1995" name="Science">
        <title>Whole-genome random sequencing and assembly of Haemophilus influenzae Rd.</title>
        <authorList>
            <person name="Fleischmann R.D."/>
            <person name="Adams M.D."/>
            <person name="White O."/>
            <person name="Clayton R.A."/>
            <person name="Kirkness E.F."/>
            <person name="Kerlavage A.R."/>
            <person name="Bult C.J."/>
            <person name="Tomb J.-F."/>
            <person name="Dougherty B.A."/>
            <person name="Merrick J.M."/>
            <person name="McKenney K."/>
            <person name="Sutton G.G."/>
            <person name="FitzHugh W."/>
            <person name="Fields C.A."/>
            <person name="Gocayne J.D."/>
            <person name="Scott J.D."/>
            <person name="Shirley R."/>
            <person name="Liu L.-I."/>
            <person name="Glodek A."/>
            <person name="Kelley J.M."/>
            <person name="Weidman J.F."/>
            <person name="Phillips C.A."/>
            <person name="Spriggs T."/>
            <person name="Hedblom E."/>
            <person name="Cotton M.D."/>
            <person name="Utterback T.R."/>
            <person name="Hanna M.C."/>
            <person name="Nguyen D.T."/>
            <person name="Saudek D.M."/>
            <person name="Brandon R.C."/>
            <person name="Fine L.D."/>
            <person name="Fritchman J.L."/>
            <person name="Fuhrmann J.L."/>
            <person name="Geoghagen N.S.M."/>
            <person name="Gnehm C.L."/>
            <person name="McDonald L.A."/>
            <person name="Small K.V."/>
            <person name="Fraser C.M."/>
            <person name="Smith H.O."/>
            <person name="Venter J.C."/>
        </authorList>
    </citation>
    <scope>NUCLEOTIDE SEQUENCE [LARGE SCALE GENOMIC DNA]</scope>
    <source>
        <strain>ATCC 51907 / DSM 11121 / KW20 / Rd</strain>
    </source>
</reference>
<accession>P44118</accession>
<dbReference type="EMBL" id="L42023">
    <property type="protein sequence ID" value="AAC22833.1"/>
    <property type="molecule type" value="Genomic_DNA"/>
</dbReference>
<dbReference type="PIR" id="A64021">
    <property type="entry name" value="A64021"/>
</dbReference>
<dbReference type="RefSeq" id="YP_008530234.1">
    <property type="nucleotide sequence ID" value="NC_000907.1"/>
</dbReference>
<dbReference type="SMR" id="P44118"/>
<dbReference type="STRING" id="71421.HI_1169"/>
<dbReference type="EnsemblBacteria" id="AAC22833">
    <property type="protein sequence ID" value="AAC22833"/>
    <property type="gene ID" value="HI_1169"/>
</dbReference>
<dbReference type="KEGG" id="hin:HI_1169"/>
<dbReference type="eggNOG" id="COG0115">
    <property type="taxonomic scope" value="Bacteria"/>
</dbReference>
<dbReference type="HOGENOM" id="CLU_114524_0_0_6"/>
<dbReference type="OrthoDB" id="1148709at2"/>
<dbReference type="PhylomeDB" id="P44118"/>
<dbReference type="BioCyc" id="HINF71421:G1GJ1-1203-MONOMER"/>
<dbReference type="Proteomes" id="UP000000579">
    <property type="component" value="Chromosome"/>
</dbReference>
<dbReference type="GO" id="GO:0003824">
    <property type="term" value="F:catalytic activity"/>
    <property type="evidence" value="ECO:0007669"/>
    <property type="project" value="InterPro"/>
</dbReference>
<dbReference type="Gene3D" id="3.30.470.10">
    <property type="match status" value="1"/>
</dbReference>
<dbReference type="Gene3D" id="3.20.10.10">
    <property type="entry name" value="D-amino Acid Aminotransferase, subunit A, domain 2"/>
    <property type="match status" value="1"/>
</dbReference>
<dbReference type="InterPro" id="IPR001544">
    <property type="entry name" value="Aminotrans_IV"/>
</dbReference>
<dbReference type="InterPro" id="IPR036038">
    <property type="entry name" value="Aminotransferase-like"/>
</dbReference>
<dbReference type="InterPro" id="IPR043132">
    <property type="entry name" value="BCAT-like_C"/>
</dbReference>
<dbReference type="InterPro" id="IPR043131">
    <property type="entry name" value="BCAT-like_N"/>
</dbReference>
<dbReference type="Pfam" id="PF01063">
    <property type="entry name" value="Aminotran_4"/>
    <property type="match status" value="1"/>
</dbReference>
<dbReference type="SUPFAM" id="SSF56752">
    <property type="entry name" value="D-aminoacid aminotransferase-like PLP-dependent enzymes"/>
    <property type="match status" value="1"/>
</dbReference>